<organism>
    <name type="scientific">Locusta migratoria</name>
    <name type="common">Migratory locust</name>
    <dbReference type="NCBI Taxonomy" id="7004"/>
    <lineage>
        <taxon>Eukaryota</taxon>
        <taxon>Metazoa</taxon>
        <taxon>Ecdysozoa</taxon>
        <taxon>Arthropoda</taxon>
        <taxon>Hexapoda</taxon>
        <taxon>Insecta</taxon>
        <taxon>Pterygota</taxon>
        <taxon>Neoptera</taxon>
        <taxon>Polyneoptera</taxon>
        <taxon>Orthoptera</taxon>
        <taxon>Caelifera</taxon>
        <taxon>Acrididea</taxon>
        <taxon>Acridomorpha</taxon>
        <taxon>Acridoidea</taxon>
        <taxon>Acrididae</taxon>
        <taxon>Oedipodinae</taxon>
        <taxon>Locusta</taxon>
    </lineage>
</organism>
<sequence>GPSGFYGVR</sequence>
<keyword id="KW-0027">Amidation</keyword>
<keyword id="KW-0903">Direct protein sequencing</keyword>
<keyword id="KW-0527">Neuropeptide</keyword>
<keyword id="KW-0964">Secreted</keyword>
<reference key="1">
    <citation type="journal article" date="1990" name="FEBS Lett.">
        <title>Locustatachykinin I and II, two novel insect neuropeptides with homology to peptides of the vertebrate tachykinin family.</title>
        <authorList>
            <person name="Schoofs L."/>
            <person name="Holman G.M."/>
            <person name="Hayes T.K."/>
            <person name="Nachman R.J."/>
            <person name="de Loof A."/>
        </authorList>
    </citation>
    <scope>PROTEIN SEQUENCE</scope>
    <scope>AMIDATION AT ARG-9</scope>
    <source>
        <tissue>Brain</tissue>
    </source>
</reference>
<feature type="peptide" id="PRO_0000044432" description="Locustatachykinin-1">
    <location>
        <begin position="1"/>
        <end position="9"/>
    </location>
</feature>
<feature type="modified residue" description="Arginine amide" evidence="1">
    <location>
        <position position="9"/>
    </location>
</feature>
<dbReference type="PIR" id="S08265">
    <property type="entry name" value="ECLQ1M"/>
</dbReference>
<dbReference type="GO" id="GO:0005576">
    <property type="term" value="C:extracellular region"/>
    <property type="evidence" value="ECO:0007669"/>
    <property type="project" value="UniProtKB-SubCell"/>
</dbReference>
<dbReference type="GO" id="GO:0007218">
    <property type="term" value="P:neuropeptide signaling pathway"/>
    <property type="evidence" value="ECO:0007669"/>
    <property type="project" value="UniProtKB-KW"/>
</dbReference>
<proteinExistence type="evidence at protein level"/>
<comment type="function">
    <text>Myoactive peptide. Stimulates the contraction of the oviduct and foregut.</text>
</comment>
<comment type="subcellular location">
    <subcellularLocation>
        <location>Secreted</location>
    </subcellularLocation>
</comment>
<name>TKL1_LOCMI</name>
<protein>
    <recommendedName>
        <fullName>Locustatachykinin-1</fullName>
    </recommendedName>
    <alternativeName>
        <fullName>Locustatachykinin I</fullName>
        <shortName>TK-I</shortName>
    </alternativeName>
</protein>
<accession>P16223</accession>
<evidence type="ECO:0000269" key="1">
    <source>
    </source>
</evidence>